<reference key="1">
    <citation type="journal article" date="2009" name="PLoS ONE">
        <title>Salmonella paratyphi C: genetic divergence from Salmonella choleraesuis and pathogenic convergence with Salmonella typhi.</title>
        <authorList>
            <person name="Liu W.-Q."/>
            <person name="Feng Y."/>
            <person name="Wang Y."/>
            <person name="Zou Q.-H."/>
            <person name="Chen F."/>
            <person name="Guo J.-T."/>
            <person name="Peng Y.-H."/>
            <person name="Jin Y."/>
            <person name="Li Y.-G."/>
            <person name="Hu S.-N."/>
            <person name="Johnston R.N."/>
            <person name="Liu G.-R."/>
            <person name="Liu S.-L."/>
        </authorList>
    </citation>
    <scope>NUCLEOTIDE SEQUENCE [LARGE SCALE GENOMIC DNA]</scope>
    <source>
        <strain>RKS4594</strain>
    </source>
</reference>
<accession>C0Q478</accession>
<organism>
    <name type="scientific">Salmonella paratyphi C (strain RKS4594)</name>
    <dbReference type="NCBI Taxonomy" id="476213"/>
    <lineage>
        <taxon>Bacteria</taxon>
        <taxon>Pseudomonadati</taxon>
        <taxon>Pseudomonadota</taxon>
        <taxon>Gammaproteobacteria</taxon>
        <taxon>Enterobacterales</taxon>
        <taxon>Enterobacteriaceae</taxon>
        <taxon>Salmonella</taxon>
    </lineage>
</organism>
<name>STHA_SALPC</name>
<comment type="function">
    <text evidence="1">Conversion of NADPH, generated by peripheral catabolic pathways, to NADH, which can enter the respiratory chain for energy generation.</text>
</comment>
<comment type="catalytic activity">
    <reaction evidence="1">
        <text>NAD(+) + NADPH = NADH + NADP(+)</text>
        <dbReference type="Rhea" id="RHEA:11692"/>
        <dbReference type="ChEBI" id="CHEBI:57540"/>
        <dbReference type="ChEBI" id="CHEBI:57783"/>
        <dbReference type="ChEBI" id="CHEBI:57945"/>
        <dbReference type="ChEBI" id="CHEBI:58349"/>
        <dbReference type="EC" id="1.6.1.1"/>
    </reaction>
</comment>
<comment type="cofactor">
    <cofactor evidence="1">
        <name>FAD</name>
        <dbReference type="ChEBI" id="CHEBI:57692"/>
    </cofactor>
    <text evidence="1">Binds 1 FAD per subunit.</text>
</comment>
<comment type="subcellular location">
    <subcellularLocation>
        <location evidence="1">Cytoplasm</location>
    </subcellularLocation>
</comment>
<comment type="similarity">
    <text evidence="1">Belongs to the class-I pyridine nucleotide-disulfide oxidoreductase family.</text>
</comment>
<feature type="chain" id="PRO_1000193459" description="Soluble pyridine nucleotide transhydrogenase">
    <location>
        <begin position="1"/>
        <end position="466"/>
    </location>
</feature>
<feature type="binding site" evidence="1">
    <location>
        <begin position="36"/>
        <end position="45"/>
    </location>
    <ligand>
        <name>FAD</name>
        <dbReference type="ChEBI" id="CHEBI:57692"/>
    </ligand>
</feature>
<keyword id="KW-0963">Cytoplasm</keyword>
<keyword id="KW-0274">FAD</keyword>
<keyword id="KW-0285">Flavoprotein</keyword>
<keyword id="KW-0520">NAD</keyword>
<keyword id="KW-0521">NADP</keyword>
<keyword id="KW-0560">Oxidoreductase</keyword>
<sequence>MPHSWDYDAVVIGSGPGGEGAAMGLVKQGARVAVIERYHNVGGGCTHWGTIPSKALRHAVSRIIEFNQNPLYSDHSRLLRSSFADILNHADNVINQQTRMRQGFYERNHCEILQGNAHFIDEHTLALECHDGTVETLTAEKFVIACGSRPYHPSDVDFSHPRIYDSDSILSLHHEPRHVIIYGAGVIGCEYASIFRGMDVKVDLINTRDRLLAFLDQEMSDSLSYHFWNSGVVIRHNEEYEKIEGCDDGVIMHLKSGKKLKADCLLYANGRTGNTDSLALENIGLETDSRGQLKVNSMYQTALPHVYAVGDVIGYPSLASAAYDQGRIAAQALVKGEATAHLIEDIPTGIYTIPEISSVGKTEQQLTAMKVPYEVGRAQFKHLARAQIVGMNVGTLKILFHRETKEILGIHCFGERAAEIIHIGQAIMEQKGGGNTIEYFVNTTFNYPTMAEAYRVAALNGLNRLF</sequence>
<proteinExistence type="inferred from homology"/>
<dbReference type="EC" id="1.6.1.1" evidence="1"/>
<dbReference type="EMBL" id="CP000857">
    <property type="protein sequence ID" value="ACN48297.1"/>
    <property type="molecule type" value="Genomic_DNA"/>
</dbReference>
<dbReference type="RefSeq" id="WP_001120791.1">
    <property type="nucleotide sequence ID" value="NC_012125.1"/>
</dbReference>
<dbReference type="SMR" id="C0Q478"/>
<dbReference type="KEGG" id="sei:SPC_4234"/>
<dbReference type="HOGENOM" id="CLU_016755_0_0_6"/>
<dbReference type="Proteomes" id="UP000001599">
    <property type="component" value="Chromosome"/>
</dbReference>
<dbReference type="GO" id="GO:0005829">
    <property type="term" value="C:cytosol"/>
    <property type="evidence" value="ECO:0007669"/>
    <property type="project" value="TreeGrafter"/>
</dbReference>
<dbReference type="GO" id="GO:0004148">
    <property type="term" value="F:dihydrolipoyl dehydrogenase (NADH) activity"/>
    <property type="evidence" value="ECO:0007669"/>
    <property type="project" value="TreeGrafter"/>
</dbReference>
<dbReference type="GO" id="GO:0050660">
    <property type="term" value="F:flavin adenine dinucleotide binding"/>
    <property type="evidence" value="ECO:0007669"/>
    <property type="project" value="TreeGrafter"/>
</dbReference>
<dbReference type="GO" id="GO:0003957">
    <property type="term" value="F:NAD(P)+ transhydrogenase (Si-specific) activity"/>
    <property type="evidence" value="ECO:0007669"/>
    <property type="project" value="UniProtKB-UniRule"/>
</dbReference>
<dbReference type="GO" id="GO:0006103">
    <property type="term" value="P:2-oxoglutarate metabolic process"/>
    <property type="evidence" value="ECO:0007669"/>
    <property type="project" value="TreeGrafter"/>
</dbReference>
<dbReference type="GO" id="GO:0006739">
    <property type="term" value="P:NADP metabolic process"/>
    <property type="evidence" value="ECO:0007669"/>
    <property type="project" value="UniProtKB-UniRule"/>
</dbReference>
<dbReference type="FunFam" id="3.30.390.30:FF:000002">
    <property type="entry name" value="Soluble pyridine nucleotide transhydrogenase"/>
    <property type="match status" value="1"/>
</dbReference>
<dbReference type="FunFam" id="3.50.50.60:FF:000008">
    <property type="entry name" value="Soluble pyridine nucleotide transhydrogenase"/>
    <property type="match status" value="1"/>
</dbReference>
<dbReference type="Gene3D" id="3.30.390.30">
    <property type="match status" value="1"/>
</dbReference>
<dbReference type="Gene3D" id="3.50.50.60">
    <property type="entry name" value="FAD/NAD(P)-binding domain"/>
    <property type="match status" value="2"/>
</dbReference>
<dbReference type="HAMAP" id="MF_00247">
    <property type="entry name" value="SthA"/>
    <property type="match status" value="1"/>
</dbReference>
<dbReference type="InterPro" id="IPR050151">
    <property type="entry name" value="Class-I_Pyr_Nuc-Dis_Oxidored"/>
</dbReference>
<dbReference type="InterPro" id="IPR036188">
    <property type="entry name" value="FAD/NAD-bd_sf"/>
</dbReference>
<dbReference type="InterPro" id="IPR023753">
    <property type="entry name" value="FAD/NAD-binding_dom"/>
</dbReference>
<dbReference type="InterPro" id="IPR016156">
    <property type="entry name" value="FAD/NAD-linked_Rdtase_dimer_sf"/>
</dbReference>
<dbReference type="InterPro" id="IPR001100">
    <property type="entry name" value="Pyr_nuc-diS_OxRdtase"/>
</dbReference>
<dbReference type="InterPro" id="IPR004099">
    <property type="entry name" value="Pyr_nucl-diS_OxRdtase_dimer"/>
</dbReference>
<dbReference type="InterPro" id="IPR022962">
    <property type="entry name" value="STH_gammaproteobact"/>
</dbReference>
<dbReference type="NCBIfam" id="NF003585">
    <property type="entry name" value="PRK05249.1"/>
    <property type="match status" value="1"/>
</dbReference>
<dbReference type="PANTHER" id="PTHR22912">
    <property type="entry name" value="DISULFIDE OXIDOREDUCTASE"/>
    <property type="match status" value="1"/>
</dbReference>
<dbReference type="PANTHER" id="PTHR22912:SF93">
    <property type="entry name" value="SOLUBLE PYRIDINE NUCLEOTIDE TRANSHYDROGENASE"/>
    <property type="match status" value="1"/>
</dbReference>
<dbReference type="Pfam" id="PF07992">
    <property type="entry name" value="Pyr_redox_2"/>
    <property type="match status" value="1"/>
</dbReference>
<dbReference type="Pfam" id="PF02852">
    <property type="entry name" value="Pyr_redox_dim"/>
    <property type="match status" value="1"/>
</dbReference>
<dbReference type="PIRSF" id="PIRSF000350">
    <property type="entry name" value="Mercury_reductase_MerA"/>
    <property type="match status" value="1"/>
</dbReference>
<dbReference type="PRINTS" id="PR00368">
    <property type="entry name" value="FADPNR"/>
</dbReference>
<dbReference type="PRINTS" id="PR00411">
    <property type="entry name" value="PNDRDTASEI"/>
</dbReference>
<dbReference type="SUPFAM" id="SSF51905">
    <property type="entry name" value="FAD/NAD(P)-binding domain"/>
    <property type="match status" value="1"/>
</dbReference>
<dbReference type="SUPFAM" id="SSF55424">
    <property type="entry name" value="FAD/NAD-linked reductases, dimerisation (C-terminal) domain"/>
    <property type="match status" value="1"/>
</dbReference>
<protein>
    <recommendedName>
        <fullName evidence="1">Soluble pyridine nucleotide transhydrogenase</fullName>
        <shortName evidence="1">STH</shortName>
        <ecNumber evidence="1">1.6.1.1</ecNumber>
    </recommendedName>
    <alternativeName>
        <fullName evidence="1">NAD(P)(+) transhydrogenase [B-specific]</fullName>
    </alternativeName>
</protein>
<gene>
    <name evidence="1" type="primary">sthA</name>
    <name evidence="1" type="synonym">udhA</name>
    <name type="ordered locus">SPC_4234</name>
</gene>
<evidence type="ECO:0000255" key="1">
    <source>
        <dbReference type="HAMAP-Rule" id="MF_00247"/>
    </source>
</evidence>